<comment type="function">
    <text evidence="1">Catalyzes the condensation of carbamoyl phosphate and aspartate to form carbamoyl aspartate and inorganic phosphate, the committed step in the de novo pyrimidine nucleotide biosynthesis pathway.</text>
</comment>
<comment type="catalytic activity">
    <reaction evidence="1">
        <text>carbamoyl phosphate + L-aspartate = N-carbamoyl-L-aspartate + phosphate + H(+)</text>
        <dbReference type="Rhea" id="RHEA:20013"/>
        <dbReference type="ChEBI" id="CHEBI:15378"/>
        <dbReference type="ChEBI" id="CHEBI:29991"/>
        <dbReference type="ChEBI" id="CHEBI:32814"/>
        <dbReference type="ChEBI" id="CHEBI:43474"/>
        <dbReference type="ChEBI" id="CHEBI:58228"/>
        <dbReference type="EC" id="2.1.3.2"/>
    </reaction>
</comment>
<comment type="pathway">
    <text evidence="1">Pyrimidine metabolism; UMP biosynthesis via de novo pathway; (S)-dihydroorotate from bicarbonate: step 2/3.</text>
</comment>
<comment type="subunit">
    <text evidence="1">Heterododecamer (2C3:3R2) of six catalytic PyrB chains organized as two trimers (C3), and six regulatory PyrI chains organized as three dimers (R2).</text>
</comment>
<comment type="similarity">
    <text evidence="1">Belongs to the aspartate/ornithine carbamoyltransferase superfamily. ATCase family.</text>
</comment>
<evidence type="ECO:0000255" key="1">
    <source>
        <dbReference type="HAMAP-Rule" id="MF_00001"/>
    </source>
</evidence>
<gene>
    <name evidence="1" type="primary">pyrB</name>
    <name type="ordered locus">BruAb2_0625</name>
</gene>
<name>PYRB_BRUAB</name>
<proteinExistence type="inferred from homology"/>
<dbReference type="EC" id="2.1.3.2" evidence="1"/>
<dbReference type="EMBL" id="AE017224">
    <property type="protein sequence ID" value="AAX76036.1"/>
    <property type="molecule type" value="Genomic_DNA"/>
</dbReference>
<dbReference type="RefSeq" id="WP_002966034.1">
    <property type="nucleotide sequence ID" value="NC_006933.1"/>
</dbReference>
<dbReference type="SMR" id="Q577Z8"/>
<dbReference type="EnsemblBacteria" id="AAX76036">
    <property type="protein sequence ID" value="AAX76036"/>
    <property type="gene ID" value="BruAb2_0625"/>
</dbReference>
<dbReference type="KEGG" id="bmb:BruAb2_0625"/>
<dbReference type="HOGENOM" id="CLU_043846_2_0_5"/>
<dbReference type="UniPathway" id="UPA00070">
    <property type="reaction ID" value="UER00116"/>
</dbReference>
<dbReference type="PRO" id="PR:Q577Z8"/>
<dbReference type="Proteomes" id="UP000000540">
    <property type="component" value="Chromosome II"/>
</dbReference>
<dbReference type="GO" id="GO:0005829">
    <property type="term" value="C:cytosol"/>
    <property type="evidence" value="ECO:0007669"/>
    <property type="project" value="TreeGrafter"/>
</dbReference>
<dbReference type="GO" id="GO:0016597">
    <property type="term" value="F:amino acid binding"/>
    <property type="evidence" value="ECO:0007669"/>
    <property type="project" value="InterPro"/>
</dbReference>
<dbReference type="GO" id="GO:0004070">
    <property type="term" value="F:aspartate carbamoyltransferase activity"/>
    <property type="evidence" value="ECO:0007669"/>
    <property type="project" value="UniProtKB-UniRule"/>
</dbReference>
<dbReference type="GO" id="GO:0006207">
    <property type="term" value="P:'de novo' pyrimidine nucleobase biosynthetic process"/>
    <property type="evidence" value="ECO:0007669"/>
    <property type="project" value="InterPro"/>
</dbReference>
<dbReference type="GO" id="GO:0044205">
    <property type="term" value="P:'de novo' UMP biosynthetic process"/>
    <property type="evidence" value="ECO:0007669"/>
    <property type="project" value="UniProtKB-UniRule"/>
</dbReference>
<dbReference type="GO" id="GO:0006520">
    <property type="term" value="P:amino acid metabolic process"/>
    <property type="evidence" value="ECO:0007669"/>
    <property type="project" value="InterPro"/>
</dbReference>
<dbReference type="FunFam" id="3.40.50.1370:FF:000007">
    <property type="entry name" value="Aspartate carbamoyltransferase"/>
    <property type="match status" value="1"/>
</dbReference>
<dbReference type="Gene3D" id="3.40.50.1370">
    <property type="entry name" value="Aspartate/ornithine carbamoyltransferase"/>
    <property type="match status" value="2"/>
</dbReference>
<dbReference type="HAMAP" id="MF_00001">
    <property type="entry name" value="Asp_carb_tr"/>
    <property type="match status" value="1"/>
</dbReference>
<dbReference type="InterPro" id="IPR006132">
    <property type="entry name" value="Asp/Orn_carbamoyltranf_P-bd"/>
</dbReference>
<dbReference type="InterPro" id="IPR006130">
    <property type="entry name" value="Asp/Orn_carbamoylTrfase"/>
</dbReference>
<dbReference type="InterPro" id="IPR036901">
    <property type="entry name" value="Asp/Orn_carbamoylTrfase_sf"/>
</dbReference>
<dbReference type="InterPro" id="IPR002082">
    <property type="entry name" value="Asp_carbamoyltransf"/>
</dbReference>
<dbReference type="InterPro" id="IPR006131">
    <property type="entry name" value="Asp_carbamoyltransf_Asp/Orn-bd"/>
</dbReference>
<dbReference type="NCBIfam" id="TIGR00670">
    <property type="entry name" value="asp_carb_tr"/>
    <property type="match status" value="1"/>
</dbReference>
<dbReference type="NCBIfam" id="NF002032">
    <property type="entry name" value="PRK00856.1"/>
    <property type="match status" value="1"/>
</dbReference>
<dbReference type="PANTHER" id="PTHR45753:SF6">
    <property type="entry name" value="ASPARTATE CARBAMOYLTRANSFERASE"/>
    <property type="match status" value="1"/>
</dbReference>
<dbReference type="PANTHER" id="PTHR45753">
    <property type="entry name" value="ORNITHINE CARBAMOYLTRANSFERASE, MITOCHONDRIAL"/>
    <property type="match status" value="1"/>
</dbReference>
<dbReference type="Pfam" id="PF00185">
    <property type="entry name" value="OTCace"/>
    <property type="match status" value="1"/>
</dbReference>
<dbReference type="Pfam" id="PF02729">
    <property type="entry name" value="OTCace_N"/>
    <property type="match status" value="1"/>
</dbReference>
<dbReference type="PRINTS" id="PR00100">
    <property type="entry name" value="AOTCASE"/>
</dbReference>
<dbReference type="PRINTS" id="PR00101">
    <property type="entry name" value="ATCASE"/>
</dbReference>
<dbReference type="SUPFAM" id="SSF53671">
    <property type="entry name" value="Aspartate/ornithine carbamoyltransferase"/>
    <property type="match status" value="1"/>
</dbReference>
<dbReference type="PROSITE" id="PS00097">
    <property type="entry name" value="CARBAMOYLTRANSFERASE"/>
    <property type="match status" value="1"/>
</dbReference>
<feature type="chain" id="PRO_0000301559" description="Aspartate carbamoyltransferase catalytic subunit">
    <location>
        <begin position="1"/>
        <end position="322"/>
    </location>
</feature>
<feature type="binding site" evidence="1">
    <location>
        <position position="65"/>
    </location>
    <ligand>
        <name>carbamoyl phosphate</name>
        <dbReference type="ChEBI" id="CHEBI:58228"/>
    </ligand>
</feature>
<feature type="binding site" evidence="1">
    <location>
        <position position="66"/>
    </location>
    <ligand>
        <name>carbamoyl phosphate</name>
        <dbReference type="ChEBI" id="CHEBI:58228"/>
    </ligand>
</feature>
<feature type="binding site" evidence="1">
    <location>
        <position position="93"/>
    </location>
    <ligand>
        <name>L-aspartate</name>
        <dbReference type="ChEBI" id="CHEBI:29991"/>
    </ligand>
</feature>
<feature type="binding site" evidence="1">
    <location>
        <position position="115"/>
    </location>
    <ligand>
        <name>carbamoyl phosphate</name>
        <dbReference type="ChEBI" id="CHEBI:58228"/>
    </ligand>
</feature>
<feature type="binding site" evidence="1">
    <location>
        <position position="143"/>
    </location>
    <ligand>
        <name>carbamoyl phosphate</name>
        <dbReference type="ChEBI" id="CHEBI:58228"/>
    </ligand>
</feature>
<feature type="binding site" evidence="1">
    <location>
        <position position="146"/>
    </location>
    <ligand>
        <name>carbamoyl phosphate</name>
        <dbReference type="ChEBI" id="CHEBI:58228"/>
    </ligand>
</feature>
<feature type="binding site" evidence="1">
    <location>
        <position position="176"/>
    </location>
    <ligand>
        <name>L-aspartate</name>
        <dbReference type="ChEBI" id="CHEBI:29991"/>
    </ligand>
</feature>
<feature type="binding site" evidence="1">
    <location>
        <position position="230"/>
    </location>
    <ligand>
        <name>L-aspartate</name>
        <dbReference type="ChEBI" id="CHEBI:29991"/>
    </ligand>
</feature>
<feature type="binding site" evidence="1">
    <location>
        <position position="271"/>
    </location>
    <ligand>
        <name>carbamoyl phosphate</name>
        <dbReference type="ChEBI" id="CHEBI:58228"/>
    </ligand>
</feature>
<feature type="binding site" evidence="1">
    <location>
        <position position="272"/>
    </location>
    <ligand>
        <name>carbamoyl phosphate</name>
        <dbReference type="ChEBI" id="CHEBI:58228"/>
    </ligand>
</feature>
<organism>
    <name type="scientific">Brucella abortus biovar 1 (strain 9-941)</name>
    <dbReference type="NCBI Taxonomy" id="262698"/>
    <lineage>
        <taxon>Bacteria</taxon>
        <taxon>Pseudomonadati</taxon>
        <taxon>Pseudomonadota</taxon>
        <taxon>Alphaproteobacteria</taxon>
        <taxon>Hyphomicrobiales</taxon>
        <taxon>Brucellaceae</taxon>
        <taxon>Brucella/Ochrobactrum group</taxon>
        <taxon>Brucella</taxon>
    </lineage>
</organism>
<sequence length="322" mass="34802">MTNQTVSPLFPHRHLLGIKGLSPLDILCLLDLADQEIAVSRQPEKKKSVLRGRTQINLFFEASTRTQSSFELAGKRLGADVMNMSVGNSSVKKGETLIDTAMTLNAMQPDILVIRHASAGAAALLAQKVGCSVVNAGDGAHEHPTQALLDALTIRRAKGQIENLIVAICGDVLHSRVARSNILLLNALGARVRVVAPSTLLPAGMADMSVEVFNSMEEGLKDADVVMMLRLQRERMAGSFVPSVREYFHFYGLDREKLKFAKPDALVMHPGPMNRGVEIASDVADGPQSVIQQQVEMGVAVRMAVMEALLDPRRNPGNGEPA</sequence>
<reference key="1">
    <citation type="journal article" date="2005" name="J. Bacteriol.">
        <title>Completion of the genome sequence of Brucella abortus and comparison to the highly similar genomes of Brucella melitensis and Brucella suis.</title>
        <authorList>
            <person name="Halling S.M."/>
            <person name="Peterson-Burch B.D."/>
            <person name="Bricker B.J."/>
            <person name="Zuerner R.L."/>
            <person name="Qing Z."/>
            <person name="Li L.-L."/>
            <person name="Kapur V."/>
            <person name="Alt D.P."/>
            <person name="Olsen S.C."/>
        </authorList>
    </citation>
    <scope>NUCLEOTIDE SEQUENCE [LARGE SCALE GENOMIC DNA]</scope>
    <source>
        <strain>9-941</strain>
    </source>
</reference>
<protein>
    <recommendedName>
        <fullName evidence="1">Aspartate carbamoyltransferase catalytic subunit</fullName>
        <ecNumber evidence="1">2.1.3.2</ecNumber>
    </recommendedName>
    <alternativeName>
        <fullName evidence="1">Aspartate transcarbamylase</fullName>
        <shortName evidence="1">ATCase</shortName>
    </alternativeName>
</protein>
<accession>Q577Z8</accession>
<keyword id="KW-0665">Pyrimidine biosynthesis</keyword>
<keyword id="KW-0808">Transferase</keyword>